<sequence length="240" mass="27556">MKTNFLVFITFTILISLGFWQLSRLKEKKLFLASMQANLTSPAINLAEIQDGLPYHKVKITGQFLPNKDIYLYGRRSMSSEKDGYYLVTPFKTIEDKVILVARGWFSNRNKNIITQATNDRQHEIIGVTMPSEKTRIYLPANDIKNNVWLTLNLKETSKVLGLDLENFYIIAEGKDISNLDILLPLAINHLAAIRNDHLEYALTWFGLAISLIVIYVIYRRRYMAVDVIPRACSGIQKNN</sequence>
<keyword id="KW-1003">Cell membrane</keyword>
<keyword id="KW-0472">Membrane</keyword>
<keyword id="KW-0812">Transmembrane</keyword>
<keyword id="KW-1133">Transmembrane helix</keyword>
<organism>
    <name type="scientific">Rickettsia conorii (strain ATCC VR-613 / Malish 7)</name>
    <dbReference type="NCBI Taxonomy" id="272944"/>
    <lineage>
        <taxon>Bacteria</taxon>
        <taxon>Pseudomonadati</taxon>
        <taxon>Pseudomonadota</taxon>
        <taxon>Alphaproteobacteria</taxon>
        <taxon>Rickettsiales</taxon>
        <taxon>Rickettsiaceae</taxon>
        <taxon>Rickettsieae</taxon>
        <taxon>Rickettsia</taxon>
        <taxon>spotted fever group</taxon>
    </lineage>
</organism>
<accession>Q92GL0</accession>
<dbReference type="EMBL" id="AE006914">
    <property type="protein sequence ID" value="AAL03651.1"/>
    <property type="molecule type" value="Genomic_DNA"/>
</dbReference>
<dbReference type="PIR" id="A97839">
    <property type="entry name" value="A97839"/>
</dbReference>
<dbReference type="RefSeq" id="WP_004997569.1">
    <property type="nucleotide sequence ID" value="NC_003103.1"/>
</dbReference>
<dbReference type="SMR" id="Q92GL0"/>
<dbReference type="KEGG" id="rco:RC1113"/>
<dbReference type="HOGENOM" id="CLU_047737_4_1_5"/>
<dbReference type="Proteomes" id="UP000000816">
    <property type="component" value="Chromosome"/>
</dbReference>
<dbReference type="GO" id="GO:0005886">
    <property type="term" value="C:plasma membrane"/>
    <property type="evidence" value="ECO:0007669"/>
    <property type="project" value="UniProtKB-SubCell"/>
</dbReference>
<dbReference type="CDD" id="cd06662">
    <property type="entry name" value="SURF1"/>
    <property type="match status" value="1"/>
</dbReference>
<dbReference type="InterPro" id="IPR002994">
    <property type="entry name" value="Surf1/Shy1"/>
</dbReference>
<dbReference type="InterPro" id="IPR045214">
    <property type="entry name" value="Surf1/Surf4"/>
</dbReference>
<dbReference type="PANTHER" id="PTHR23427">
    <property type="entry name" value="SURFEIT LOCUS PROTEIN"/>
    <property type="match status" value="1"/>
</dbReference>
<dbReference type="PANTHER" id="PTHR23427:SF2">
    <property type="entry name" value="SURFEIT LOCUS PROTEIN 1"/>
    <property type="match status" value="1"/>
</dbReference>
<dbReference type="Pfam" id="PF02104">
    <property type="entry name" value="SURF1"/>
    <property type="match status" value="1"/>
</dbReference>
<dbReference type="PROSITE" id="PS50895">
    <property type="entry name" value="SURF1"/>
    <property type="match status" value="1"/>
</dbReference>
<proteinExistence type="inferred from homology"/>
<name>SURF1_RICCN</name>
<evidence type="ECO:0000255" key="1"/>
<evidence type="ECO:0000305" key="2"/>
<comment type="subcellular location">
    <subcellularLocation>
        <location evidence="2">Cell membrane</location>
        <topology evidence="2">Multi-pass membrane protein</topology>
    </subcellularLocation>
</comment>
<comment type="similarity">
    <text evidence="2">Belongs to the SURF1 family.</text>
</comment>
<protein>
    <recommendedName>
        <fullName>SURF1-like protein</fullName>
    </recommendedName>
</protein>
<feature type="chain" id="PRO_0000215660" description="SURF1-like protein">
    <location>
        <begin position="1"/>
        <end position="240"/>
    </location>
</feature>
<feature type="transmembrane region" description="Helical" evidence="1">
    <location>
        <begin position="7"/>
        <end position="23"/>
    </location>
</feature>
<feature type="transmembrane region" description="Helical" evidence="1">
    <location>
        <begin position="201"/>
        <end position="219"/>
    </location>
</feature>
<reference key="1">
    <citation type="journal article" date="2001" name="Science">
        <title>Mechanisms of evolution in Rickettsia conorii and R. prowazekii.</title>
        <authorList>
            <person name="Ogata H."/>
            <person name="Audic S."/>
            <person name="Renesto-Audiffren P."/>
            <person name="Fournier P.-E."/>
            <person name="Barbe V."/>
            <person name="Samson D."/>
            <person name="Roux V."/>
            <person name="Cossart P."/>
            <person name="Weissenbach J."/>
            <person name="Claverie J.-M."/>
            <person name="Raoult D."/>
        </authorList>
    </citation>
    <scope>NUCLEOTIDE SEQUENCE [LARGE SCALE GENOMIC DNA]</scope>
    <source>
        <strain>ATCC VR-613 / Malish 7</strain>
    </source>
</reference>
<gene>
    <name type="ordered locus">RC1113</name>
</gene>